<name>UBIA_ALBFT</name>
<keyword id="KW-0997">Cell inner membrane</keyword>
<keyword id="KW-1003">Cell membrane</keyword>
<keyword id="KW-0460">Magnesium</keyword>
<keyword id="KW-0472">Membrane</keyword>
<keyword id="KW-1185">Reference proteome</keyword>
<keyword id="KW-0808">Transferase</keyword>
<keyword id="KW-0812">Transmembrane</keyword>
<keyword id="KW-1133">Transmembrane helix</keyword>
<keyword id="KW-0831">Ubiquinone biosynthesis</keyword>
<proteinExistence type="inferred from homology"/>
<dbReference type="EC" id="2.5.1.39" evidence="1"/>
<dbReference type="EMBL" id="CP000267">
    <property type="protein sequence ID" value="ABD71380.1"/>
    <property type="molecule type" value="Genomic_DNA"/>
</dbReference>
<dbReference type="RefSeq" id="WP_011465943.1">
    <property type="nucleotide sequence ID" value="NC_007908.1"/>
</dbReference>
<dbReference type="SMR" id="Q21S73"/>
<dbReference type="STRING" id="338969.Rfer_3680"/>
<dbReference type="KEGG" id="rfr:Rfer_3680"/>
<dbReference type="eggNOG" id="COG0382">
    <property type="taxonomic scope" value="Bacteria"/>
</dbReference>
<dbReference type="HOGENOM" id="CLU_034879_1_0_4"/>
<dbReference type="OrthoDB" id="9782418at2"/>
<dbReference type="UniPathway" id="UPA00232"/>
<dbReference type="Proteomes" id="UP000008332">
    <property type="component" value="Chromosome"/>
</dbReference>
<dbReference type="GO" id="GO:0005886">
    <property type="term" value="C:plasma membrane"/>
    <property type="evidence" value="ECO:0007669"/>
    <property type="project" value="UniProtKB-SubCell"/>
</dbReference>
<dbReference type="GO" id="GO:0008412">
    <property type="term" value="F:4-hydroxybenzoate polyprenyltransferase activity"/>
    <property type="evidence" value="ECO:0007669"/>
    <property type="project" value="UniProtKB-UniRule"/>
</dbReference>
<dbReference type="GO" id="GO:0006744">
    <property type="term" value="P:ubiquinone biosynthetic process"/>
    <property type="evidence" value="ECO:0007669"/>
    <property type="project" value="UniProtKB-UniRule"/>
</dbReference>
<dbReference type="CDD" id="cd13959">
    <property type="entry name" value="PT_UbiA_COQ2"/>
    <property type="match status" value="1"/>
</dbReference>
<dbReference type="FunFam" id="1.10.357.140:FF:000002">
    <property type="entry name" value="4-hydroxybenzoate octaprenyltransferase"/>
    <property type="match status" value="1"/>
</dbReference>
<dbReference type="FunFam" id="1.20.120.1780:FF:000001">
    <property type="entry name" value="4-hydroxybenzoate octaprenyltransferase"/>
    <property type="match status" value="1"/>
</dbReference>
<dbReference type="Gene3D" id="1.10.357.140">
    <property type="entry name" value="UbiA prenyltransferase"/>
    <property type="match status" value="1"/>
</dbReference>
<dbReference type="Gene3D" id="1.20.120.1780">
    <property type="entry name" value="UbiA prenyltransferase"/>
    <property type="match status" value="1"/>
</dbReference>
<dbReference type="HAMAP" id="MF_01635">
    <property type="entry name" value="UbiA"/>
    <property type="match status" value="1"/>
</dbReference>
<dbReference type="InterPro" id="IPR006370">
    <property type="entry name" value="HB_polyprenyltransferase-like"/>
</dbReference>
<dbReference type="InterPro" id="IPR039653">
    <property type="entry name" value="Prenyltransferase"/>
</dbReference>
<dbReference type="InterPro" id="IPR000537">
    <property type="entry name" value="UbiA_prenyltransferase"/>
</dbReference>
<dbReference type="InterPro" id="IPR030470">
    <property type="entry name" value="UbiA_prenylTrfase_CS"/>
</dbReference>
<dbReference type="InterPro" id="IPR044878">
    <property type="entry name" value="UbiA_sf"/>
</dbReference>
<dbReference type="NCBIfam" id="TIGR01474">
    <property type="entry name" value="ubiA_proteo"/>
    <property type="match status" value="1"/>
</dbReference>
<dbReference type="PANTHER" id="PTHR11048:SF28">
    <property type="entry name" value="4-HYDROXYBENZOATE POLYPRENYLTRANSFERASE, MITOCHONDRIAL"/>
    <property type="match status" value="1"/>
</dbReference>
<dbReference type="PANTHER" id="PTHR11048">
    <property type="entry name" value="PRENYLTRANSFERASES"/>
    <property type="match status" value="1"/>
</dbReference>
<dbReference type="Pfam" id="PF01040">
    <property type="entry name" value="UbiA"/>
    <property type="match status" value="1"/>
</dbReference>
<dbReference type="PROSITE" id="PS00943">
    <property type="entry name" value="UBIA"/>
    <property type="match status" value="1"/>
</dbReference>
<feature type="chain" id="PRO_0000262831" description="4-hydroxybenzoate octaprenyltransferase">
    <location>
        <begin position="1"/>
        <end position="296"/>
    </location>
</feature>
<feature type="transmembrane region" description="Helical" evidence="1">
    <location>
        <begin position="29"/>
        <end position="49"/>
    </location>
</feature>
<feature type="transmembrane region" description="Helical" evidence="1">
    <location>
        <begin position="52"/>
        <end position="72"/>
    </location>
</feature>
<feature type="transmembrane region" description="Helical" evidence="1">
    <location>
        <begin position="103"/>
        <end position="123"/>
    </location>
</feature>
<feature type="transmembrane region" description="Helical" evidence="1">
    <location>
        <begin position="151"/>
        <end position="171"/>
    </location>
</feature>
<feature type="transmembrane region" description="Helical" evidence="1">
    <location>
        <begin position="176"/>
        <end position="196"/>
    </location>
</feature>
<feature type="transmembrane region" description="Helical" evidence="1">
    <location>
        <begin position="220"/>
        <end position="240"/>
    </location>
</feature>
<feature type="transmembrane region" description="Helical" evidence="1">
    <location>
        <begin position="243"/>
        <end position="263"/>
    </location>
</feature>
<feature type="transmembrane region" description="Helical" evidence="1">
    <location>
        <begin position="275"/>
        <end position="295"/>
    </location>
</feature>
<reference key="1">
    <citation type="submission" date="2006-02" db="EMBL/GenBank/DDBJ databases">
        <title>Complete sequence of chromosome of Rhodoferax ferrireducens DSM 15236.</title>
        <authorList>
            <person name="Copeland A."/>
            <person name="Lucas S."/>
            <person name="Lapidus A."/>
            <person name="Barry K."/>
            <person name="Detter J.C."/>
            <person name="Glavina del Rio T."/>
            <person name="Hammon N."/>
            <person name="Israni S."/>
            <person name="Pitluck S."/>
            <person name="Brettin T."/>
            <person name="Bruce D."/>
            <person name="Han C."/>
            <person name="Tapia R."/>
            <person name="Gilna P."/>
            <person name="Kiss H."/>
            <person name="Schmutz J."/>
            <person name="Larimer F."/>
            <person name="Land M."/>
            <person name="Kyrpides N."/>
            <person name="Ivanova N."/>
            <person name="Richardson P."/>
        </authorList>
    </citation>
    <scope>NUCLEOTIDE SEQUENCE [LARGE SCALE GENOMIC DNA]</scope>
    <source>
        <strain>ATCC BAA-621 / DSM 15236 / T118</strain>
    </source>
</reference>
<comment type="function">
    <text evidence="1">Catalyzes the prenylation of para-hydroxybenzoate (PHB) with an all-trans polyprenyl group. Mediates the second step in the final reaction sequence of ubiquinone-8 (UQ-8) biosynthesis, which is the condensation of the polyisoprenoid side chain with PHB, generating the first membrane-bound Q intermediate 3-octaprenyl-4-hydroxybenzoate.</text>
</comment>
<comment type="catalytic activity">
    <reaction evidence="1">
        <text>all-trans-octaprenyl diphosphate + 4-hydroxybenzoate = 4-hydroxy-3-(all-trans-octaprenyl)benzoate + diphosphate</text>
        <dbReference type="Rhea" id="RHEA:27782"/>
        <dbReference type="ChEBI" id="CHEBI:1617"/>
        <dbReference type="ChEBI" id="CHEBI:17879"/>
        <dbReference type="ChEBI" id="CHEBI:33019"/>
        <dbReference type="ChEBI" id="CHEBI:57711"/>
        <dbReference type="EC" id="2.5.1.39"/>
    </reaction>
</comment>
<comment type="cofactor">
    <cofactor evidence="1">
        <name>Mg(2+)</name>
        <dbReference type="ChEBI" id="CHEBI:18420"/>
    </cofactor>
</comment>
<comment type="pathway">
    <text evidence="1">Cofactor biosynthesis; ubiquinone biosynthesis.</text>
</comment>
<comment type="subcellular location">
    <subcellularLocation>
        <location evidence="1">Cell inner membrane</location>
        <topology evidence="1">Multi-pass membrane protein</topology>
    </subcellularLocation>
</comment>
<comment type="similarity">
    <text evidence="1">Belongs to the UbiA prenyltransferase family.</text>
</comment>
<evidence type="ECO:0000255" key="1">
    <source>
        <dbReference type="HAMAP-Rule" id="MF_01635"/>
    </source>
</evidence>
<gene>
    <name evidence="1" type="primary">ubiA</name>
    <name type="ordered locus">Rfer_3680</name>
</gene>
<sequence length="296" mass="32438">MKSAPSRPRSPLQSRLALYLDLIRWNRPAGWLLLLWPTLSALWVAAGGFPGWHLLSVFTLGTILMRSAGCCINDVADRDFDRHVKRTAARPVTTGAVSVKEALVLGAVLALLAFALVLTTNAITIGISGAALAITLAYPYAKRYVSMPQAVLGVAFGMGIPMAFAAVLGEVPRLAWLLMLGNLFWVLAYDTEYAMVDRDDDIRLGLKTSAITLGRLDVPVILLCYLAFIVIWDVALMPYVQGALFTIAFALAFGQVAWHYTLIRSRSREGCFKAFRLNHWLGFTLFVGIAGSYALR</sequence>
<accession>Q21S73</accession>
<protein>
    <recommendedName>
        <fullName evidence="1">4-hydroxybenzoate octaprenyltransferase</fullName>
        <ecNumber evidence="1">2.5.1.39</ecNumber>
    </recommendedName>
    <alternativeName>
        <fullName evidence="1">4-HB polyprenyltransferase</fullName>
    </alternativeName>
</protein>
<organism>
    <name type="scientific">Albidiferax ferrireducens (strain ATCC BAA-621 / DSM 15236 / T118)</name>
    <name type="common">Rhodoferax ferrireducens</name>
    <dbReference type="NCBI Taxonomy" id="338969"/>
    <lineage>
        <taxon>Bacteria</taxon>
        <taxon>Pseudomonadati</taxon>
        <taxon>Pseudomonadota</taxon>
        <taxon>Betaproteobacteria</taxon>
        <taxon>Burkholderiales</taxon>
        <taxon>Comamonadaceae</taxon>
        <taxon>Rhodoferax</taxon>
    </lineage>
</organism>